<protein>
    <recommendedName>
        <fullName evidence="11">Protein FAR-RED-ELONGATED HYPOCOTYL 1-LIKE</fullName>
    </recommendedName>
</protein>
<feature type="chain" id="PRO_0000436755" description="Protein FAR-RED-ELONGATED HYPOCOTYL 1-LIKE">
    <location>
        <begin position="1"/>
        <end position="201"/>
    </location>
</feature>
<feature type="short sequence motif" description="Nuclear localization sequence (NLS)" evidence="2">
    <location>
        <begin position="32"/>
        <end position="35"/>
    </location>
</feature>
<feature type="short sequence motif" description="Nuclear export sequence (NES)" evidence="2">
    <location>
        <begin position="43"/>
        <end position="46"/>
    </location>
</feature>
<feature type="splice variant" id="VSP_058418" description="In isoform 2.">
    <location>
        <begin position="1"/>
        <end position="20"/>
    </location>
</feature>
<feature type="splice variant" id="VSP_058419" description="In isoform 3.">
    <original>DSK</original>
    <variation>GNQ</variation>
    <location>
        <begin position="178"/>
        <end position="180"/>
    </location>
</feature>
<feature type="splice variant" id="VSP_058420" description="In isoform 3.">
    <location>
        <begin position="181"/>
        <end position="201"/>
    </location>
</feature>
<feature type="mutagenesis site" description="Impaired nuclear import." evidence="2">
    <original>KKRK</original>
    <variation>AAAA</variation>
    <location>
        <begin position="32"/>
        <end position="35"/>
    </location>
</feature>
<feature type="mutagenesis site" description="Impaired nuclear export." evidence="2">
    <original>LLPL</original>
    <variation>AAAA</variation>
    <location>
        <begin position="43"/>
        <end position="46"/>
    </location>
</feature>
<accession>A8MR65</accession>
<accession>D5MAD5</accession>
<accession>Q9LZL2</accession>
<dbReference type="EMBL" id="HM029243">
    <property type="protein sequence ID" value="ADE60263.1"/>
    <property type="molecule type" value="mRNA"/>
</dbReference>
<dbReference type="EMBL" id="HM029244">
    <property type="protein sequence ID" value="ADE60264.1"/>
    <property type="molecule type" value="mRNA"/>
</dbReference>
<dbReference type="EMBL" id="HM029245">
    <property type="protein sequence ID" value="ADE60265.1"/>
    <property type="molecule type" value="mRNA"/>
</dbReference>
<dbReference type="EMBL" id="AL162508">
    <property type="protein sequence ID" value="CAB82993.1"/>
    <property type="molecule type" value="Genomic_DNA"/>
</dbReference>
<dbReference type="EMBL" id="CP002688">
    <property type="protein sequence ID" value="AED90443.1"/>
    <property type="molecule type" value="Genomic_DNA"/>
</dbReference>
<dbReference type="EMBL" id="CP002688">
    <property type="protein sequence ID" value="AED90444.1"/>
    <property type="molecule type" value="Genomic_DNA"/>
</dbReference>
<dbReference type="PIR" id="T48241">
    <property type="entry name" value="T48241"/>
</dbReference>
<dbReference type="RefSeq" id="NP_001078521.1">
    <molecule id="A8MR65-1"/>
    <property type="nucleotide sequence ID" value="NM_001085052.2"/>
</dbReference>
<dbReference type="RefSeq" id="NP_195840.1">
    <molecule id="A8MR65-2"/>
    <property type="nucleotide sequence ID" value="NM_120298.3"/>
</dbReference>
<dbReference type="FunCoup" id="A8MR65">
    <property type="interactions" value="2"/>
</dbReference>
<dbReference type="IntAct" id="A8MR65">
    <property type="interactions" value="2"/>
</dbReference>
<dbReference type="STRING" id="3702.A8MR65"/>
<dbReference type="iPTMnet" id="A8MR65"/>
<dbReference type="PaxDb" id="3702-AT5G02200.2"/>
<dbReference type="DNASU" id="830832"/>
<dbReference type="EnsemblPlants" id="AT5G02200.1">
    <molecule id="A8MR65-2"/>
    <property type="protein sequence ID" value="AT5G02200.1"/>
    <property type="gene ID" value="AT5G02200"/>
</dbReference>
<dbReference type="EnsemblPlants" id="AT5G02200.2">
    <molecule id="A8MR65-1"/>
    <property type="protein sequence ID" value="AT5G02200.2"/>
    <property type="gene ID" value="AT5G02200"/>
</dbReference>
<dbReference type="GeneID" id="830832"/>
<dbReference type="Gramene" id="AT5G02200.1">
    <molecule id="A8MR65-2"/>
    <property type="protein sequence ID" value="AT5G02200.1"/>
    <property type="gene ID" value="AT5G02200"/>
</dbReference>
<dbReference type="Gramene" id="AT5G02200.2">
    <molecule id="A8MR65-1"/>
    <property type="protein sequence ID" value="AT5G02200.2"/>
    <property type="gene ID" value="AT5G02200"/>
</dbReference>
<dbReference type="KEGG" id="ath:AT5G02200"/>
<dbReference type="Araport" id="AT5G02200"/>
<dbReference type="TAIR" id="AT5G02200">
    <property type="gene designation" value="FHL"/>
</dbReference>
<dbReference type="eggNOG" id="ENOG502S4AF">
    <property type="taxonomic scope" value="Eukaryota"/>
</dbReference>
<dbReference type="InParanoid" id="A8MR65"/>
<dbReference type="OMA" id="DIDHMMM"/>
<dbReference type="OrthoDB" id="1930763at2759"/>
<dbReference type="PhylomeDB" id="A8MR65"/>
<dbReference type="PRO" id="PR:A8MR65"/>
<dbReference type="Proteomes" id="UP000006548">
    <property type="component" value="Chromosome 5"/>
</dbReference>
<dbReference type="ExpressionAtlas" id="A8MR65">
    <property type="expression patterns" value="baseline and differential"/>
</dbReference>
<dbReference type="GO" id="GO:0005737">
    <property type="term" value="C:cytoplasm"/>
    <property type="evidence" value="ECO:0000314"/>
    <property type="project" value="UniProtKB"/>
</dbReference>
<dbReference type="GO" id="GO:0016607">
    <property type="term" value="C:nuclear speck"/>
    <property type="evidence" value="ECO:0000314"/>
    <property type="project" value="TAIR"/>
</dbReference>
<dbReference type="GO" id="GO:0005634">
    <property type="term" value="C:nucleus"/>
    <property type="evidence" value="ECO:0000314"/>
    <property type="project" value="UniProtKB"/>
</dbReference>
<dbReference type="GO" id="GO:0042803">
    <property type="term" value="F:protein homodimerization activity"/>
    <property type="evidence" value="ECO:0000314"/>
    <property type="project" value="UniProtKB"/>
</dbReference>
<dbReference type="GO" id="GO:0051457">
    <property type="term" value="P:maintenance of protein location in nucleus"/>
    <property type="evidence" value="ECO:0000315"/>
    <property type="project" value="TAIR"/>
</dbReference>
<dbReference type="GO" id="GO:0045893">
    <property type="term" value="P:positive regulation of DNA-templated transcription"/>
    <property type="evidence" value="ECO:0000250"/>
    <property type="project" value="UniProtKB"/>
</dbReference>
<dbReference type="GO" id="GO:0031048">
    <property type="term" value="P:regulatory ncRNA-mediated heterochromatin formation"/>
    <property type="evidence" value="ECO:0000250"/>
    <property type="project" value="UniProtKB"/>
</dbReference>
<dbReference type="GO" id="GO:0009637">
    <property type="term" value="P:response to blue light"/>
    <property type="evidence" value="ECO:0000315"/>
    <property type="project" value="TAIR"/>
</dbReference>
<dbReference type="GO" id="GO:0010218">
    <property type="term" value="P:response to far red light"/>
    <property type="evidence" value="ECO:0000314"/>
    <property type="project" value="UniProtKB"/>
</dbReference>
<dbReference type="InterPro" id="IPR037766">
    <property type="entry name" value="FHY1"/>
</dbReference>
<dbReference type="PANTHER" id="PTHR37723">
    <property type="entry name" value="PROTEIN FAR-RED ELONGATED HYPOCOTYL 1"/>
    <property type="match status" value="1"/>
</dbReference>
<dbReference type="PANTHER" id="PTHR37723:SF1">
    <property type="entry name" value="PROTEIN FAR-RED-ELONGATED HYPOCOTYL 1-LIKE"/>
    <property type="match status" value="1"/>
</dbReference>
<sequence>MDDADKSCSPSLDHSDINDPMIVAVESLDTSKKRKLHAEESDLLPLPKHFCSEHQASLVNSSCPSSVIDYAECSYAMENTKTSDEASSSASFTGPSLYMFKDSIYSTGSSSSGYAATSSIEQCFSKVDHKTQEDTQDFTHMEFIYHDSEFAVEDLQEVLNPVESYILSSARWSVSNQDSKEATTKPTIDQEFEQYFSTLMM</sequence>
<gene>
    <name evidence="11" type="primary">FHL</name>
    <name evidence="14" type="ordered locus">At5g02200</name>
    <name evidence="15" type="ORF">T7H20.250</name>
</gene>
<reference key="1">
    <citation type="journal article" date="2010" name="Plant Cell">
        <title>Arabidopsis transcription factor ELONGATED HYPOCOTYL5 plays a role in the feedback regulation of phytochrome A signaling.</title>
        <authorList>
            <person name="Li J."/>
            <person name="Li G."/>
            <person name="Gao S."/>
            <person name="Martinez C."/>
            <person name="He G."/>
            <person name="Zhou Z."/>
            <person name="Huang X."/>
            <person name="Lee J.-H."/>
            <person name="Zhang H."/>
            <person name="Shen Y."/>
            <person name="Wang H."/>
            <person name="Deng X.W."/>
        </authorList>
    </citation>
    <scope>NUCLEOTIDE SEQUENCE [MRNA] (ISOFORMS 1; 2 AND 3)</scope>
    <scope>INDUCTION BY FAR-RED LIGHT</scope>
    <source>
        <strain>cv. Columbia</strain>
    </source>
</reference>
<reference key="2">
    <citation type="journal article" date="2000" name="Nature">
        <title>Sequence and analysis of chromosome 5 of the plant Arabidopsis thaliana.</title>
        <authorList>
            <person name="Tabata S."/>
            <person name="Kaneko T."/>
            <person name="Nakamura Y."/>
            <person name="Kotani H."/>
            <person name="Kato T."/>
            <person name="Asamizu E."/>
            <person name="Miyajima N."/>
            <person name="Sasamoto S."/>
            <person name="Kimura T."/>
            <person name="Hosouchi T."/>
            <person name="Kawashima K."/>
            <person name="Kohara M."/>
            <person name="Matsumoto M."/>
            <person name="Matsuno A."/>
            <person name="Muraki A."/>
            <person name="Nakayama S."/>
            <person name="Nakazaki N."/>
            <person name="Naruo K."/>
            <person name="Okumura S."/>
            <person name="Shinpo S."/>
            <person name="Takeuchi C."/>
            <person name="Wada T."/>
            <person name="Watanabe A."/>
            <person name="Yamada M."/>
            <person name="Yasuda M."/>
            <person name="Sato S."/>
            <person name="de la Bastide M."/>
            <person name="Huang E."/>
            <person name="Spiegel L."/>
            <person name="Gnoj L."/>
            <person name="O'Shaughnessy A."/>
            <person name="Preston R."/>
            <person name="Habermann K."/>
            <person name="Murray J."/>
            <person name="Johnson D."/>
            <person name="Rohlfing T."/>
            <person name="Nelson J."/>
            <person name="Stoneking T."/>
            <person name="Pepin K."/>
            <person name="Spieth J."/>
            <person name="Sekhon M."/>
            <person name="Armstrong J."/>
            <person name="Becker M."/>
            <person name="Belter E."/>
            <person name="Cordum H."/>
            <person name="Cordes M."/>
            <person name="Courtney L."/>
            <person name="Courtney W."/>
            <person name="Dante M."/>
            <person name="Du H."/>
            <person name="Edwards J."/>
            <person name="Fryman J."/>
            <person name="Haakensen B."/>
            <person name="Lamar E."/>
            <person name="Latreille P."/>
            <person name="Leonard S."/>
            <person name="Meyer R."/>
            <person name="Mulvaney E."/>
            <person name="Ozersky P."/>
            <person name="Riley A."/>
            <person name="Strowmatt C."/>
            <person name="Wagner-McPherson C."/>
            <person name="Wollam A."/>
            <person name="Yoakum M."/>
            <person name="Bell M."/>
            <person name="Dedhia N."/>
            <person name="Parnell L."/>
            <person name="Shah R."/>
            <person name="Rodriguez M."/>
            <person name="Hoon See L."/>
            <person name="Vil D."/>
            <person name="Baker J."/>
            <person name="Kirchoff K."/>
            <person name="Toth K."/>
            <person name="King L."/>
            <person name="Bahret A."/>
            <person name="Miller B."/>
            <person name="Marra M.A."/>
            <person name="Martienssen R."/>
            <person name="McCombie W.R."/>
            <person name="Wilson R.K."/>
            <person name="Murphy G."/>
            <person name="Bancroft I."/>
            <person name="Volckaert G."/>
            <person name="Wambutt R."/>
            <person name="Duesterhoeft A."/>
            <person name="Stiekema W."/>
            <person name="Pohl T."/>
            <person name="Entian K.-D."/>
            <person name="Terryn N."/>
            <person name="Hartley N."/>
            <person name="Bent E."/>
            <person name="Johnson S."/>
            <person name="Langham S.-A."/>
            <person name="McCullagh B."/>
            <person name="Robben J."/>
            <person name="Grymonprez B."/>
            <person name="Zimmermann W."/>
            <person name="Ramsperger U."/>
            <person name="Wedler H."/>
            <person name="Balke K."/>
            <person name="Wedler E."/>
            <person name="Peters S."/>
            <person name="van Staveren M."/>
            <person name="Dirkse W."/>
            <person name="Mooijman P."/>
            <person name="Klein Lankhorst R."/>
            <person name="Weitzenegger T."/>
            <person name="Bothe G."/>
            <person name="Rose M."/>
            <person name="Hauf J."/>
            <person name="Berneiser S."/>
            <person name="Hempel S."/>
            <person name="Feldpausch M."/>
            <person name="Lamberth S."/>
            <person name="Villarroel R."/>
            <person name="Gielen J."/>
            <person name="Ardiles W."/>
            <person name="Bents O."/>
            <person name="Lemcke K."/>
            <person name="Kolesov G."/>
            <person name="Mayer K.F.X."/>
            <person name="Rudd S."/>
            <person name="Schoof H."/>
            <person name="Schueller C."/>
            <person name="Zaccaria P."/>
            <person name="Mewes H.-W."/>
            <person name="Bevan M."/>
            <person name="Fransz P.F."/>
        </authorList>
    </citation>
    <scope>NUCLEOTIDE SEQUENCE [LARGE SCALE GENOMIC DNA]</scope>
    <source>
        <strain>cv. Columbia</strain>
    </source>
</reference>
<reference key="3">
    <citation type="journal article" date="2017" name="Plant J.">
        <title>Araport11: a complete reannotation of the Arabidopsis thaliana reference genome.</title>
        <authorList>
            <person name="Cheng C.Y."/>
            <person name="Krishnakumar V."/>
            <person name="Chan A.P."/>
            <person name="Thibaud-Nissen F."/>
            <person name="Schobel S."/>
            <person name="Town C.D."/>
        </authorList>
    </citation>
    <scope>GENOME REANNOTATION</scope>
    <source>
        <strain>cv. Columbia</strain>
    </source>
</reference>
<reference key="4">
    <citation type="journal article" date="2005" name="Plant J.">
        <title>FHL is required for full phytochrome A signaling and shares overlapping functions with FHY1.</title>
        <authorList>
            <person name="Zhou Q."/>
            <person name="Hare P.D."/>
            <person name="Yang S.W."/>
            <person name="Zeidler M."/>
            <person name="Huang L.-F."/>
            <person name="Chua N.-H."/>
        </authorList>
    </citation>
    <scope>FUNCTION</scope>
    <scope>MUTAGENESIS OF 32-LYS--LYS-35 AND 43-LEU--LEU-46</scope>
    <scope>DISRUPTION PHENOTYPE</scope>
    <scope>NUCLEAR LOCALIZATION AND NUCLEAR EXPORT MOTIFS</scope>
    <scope>REPRESSION BY LIGHT</scope>
    <scope>INTERACTION WITH FHY1</scope>
    <scope>HOMODIMERIZATION</scope>
    <scope>INDUCTION BY FHY3</scope>
</reference>
<reference key="5">
    <citation type="journal article" date="2007" name="Proc. Natl. Acad. Sci. U.S.A.">
        <title>Arabidopsis fhl/fhy1 double mutant reveals a distinct cytoplasmic action of phytochrome A.</title>
        <authorList>
            <person name="Roesler J."/>
            <person name="Klein I."/>
            <person name="Zeidler M."/>
        </authorList>
    </citation>
    <scope>FUNCTION</scope>
    <scope>DISRUPTION PHENOTYPE</scope>
</reference>
<reference key="6">
    <citation type="journal article" date="2007" name="Science">
        <title>Transposase-derived transcription factors regulate light signaling in Arabidopsis.</title>
        <authorList>
            <person name="Lin R."/>
            <person name="Ding L."/>
            <person name="Casola C."/>
            <person name="Ripoll D.R."/>
            <person name="Feschotte C."/>
            <person name="Wang H."/>
        </authorList>
    </citation>
    <scope>REGULATION BY FAR-RED LIGHT</scope>
</reference>
<reference key="7">
    <citation type="journal article" date="2009" name="Plant Cell">
        <title>Phytochrome A mediates rapid red light-induced phosphorylation of Arabidopsis FAR-RED ELONGATED HYPOCOTYL1 in a low fluence response.</title>
        <authorList>
            <person name="Shen Y."/>
            <person name="Zhou Z."/>
            <person name="Feng S."/>
            <person name="Li J."/>
            <person name="Tan-Wilson A."/>
            <person name="Qu L.J."/>
            <person name="Wang H."/>
            <person name="Deng X.W."/>
        </authorList>
    </citation>
    <scope>PHOSPHORYLATION BY PHYA</scope>
    <scope>INTERACTION WITH PHYA</scope>
</reference>
<reference key="8">
    <citation type="journal article" date="2009" name="Plant Cell">
        <title>FAR-RED ELONGATED HYPOCOTYL1 and FHY1-LIKE associate with the Arabidopsis transcription factors LAF1 and HFR1 to transmit phytochrome A signals for inhibition of hypocotyl elongation.</title>
        <authorList>
            <person name="Yang S.W."/>
            <person name="Jang I.-C."/>
            <person name="Henriques R."/>
            <person name="Chua N.-H."/>
        </authorList>
    </citation>
    <scope>FUNCTION</scope>
    <scope>DISRUPTION PHENOTYPE</scope>
    <scope>SUBCELLULAR LOCATION</scope>
    <scope>INTERACTION WITH LAF1 AND HFR1</scope>
    <source>
        <strain>cv. Columbia</strain>
    </source>
</reference>
<reference key="9">
    <citation type="journal article" date="2011" name="Arabidopsis Book">
        <title>Phytochrome signaling mechanisms.</title>
        <authorList>
            <person name="Li J."/>
            <person name="Li G."/>
            <person name="Wang H."/>
            <person name="Deng X.W."/>
        </authorList>
    </citation>
    <scope>REVIEW</scope>
</reference>
<reference key="10">
    <citation type="journal article" date="2011" name="Cell">
        <title>Photoconversion and nuclear trafficking cycles determine phytochrome A's response profile to far-red light.</title>
        <authorList>
            <person name="Rausenberger J."/>
            <person name="Tscheuschler A."/>
            <person name="Nordmeier W."/>
            <person name="Wuest F."/>
            <person name="Timmer J."/>
            <person name="Schaefer E."/>
            <person name="Fleck C."/>
            <person name="Hiltbrunner A."/>
        </authorList>
    </citation>
    <scope>INTERACTION WITH PHYA</scope>
    <scope>SUBCELLULAR LOCATION</scope>
</reference>
<reference key="11">
    <citation type="journal article" date="2012" name="Plant Cell">
        <title>Nuclear phytochrome A signaling promotes phototropism in Arabidopsis.</title>
        <authorList>
            <person name="Kami C."/>
            <person name="Hersch M."/>
            <person name="Trevisan M."/>
            <person name="Genoud T."/>
            <person name="Hiltbrunner A."/>
            <person name="Bergmann S."/>
            <person name="Fankhauser C."/>
        </authorList>
    </citation>
    <scope>DISRUPTION PHENOTYPE</scope>
    <scope>FUNCTION</scope>
    <source>
        <strain>cv. Columbia</strain>
    </source>
</reference>
<reference key="12">
    <citation type="journal article" date="2012" name="Plant Physiol.">
        <title>Missense mutation in the amino terminus of phytochrome A disrupts the nuclear import of the photoreceptor.</title>
        <authorList>
            <person name="Sokolova V."/>
            <person name="Bindics J."/>
            <person name="Kircher S."/>
            <person name="Adam E."/>
            <person name="Schaefer E."/>
            <person name="Nagy F."/>
            <person name="Viczian A."/>
        </authorList>
    </citation>
    <scope>INTERACTION WITH PHYA</scope>
</reference>
<name>FHL_ARATH</name>
<proteinExistence type="evidence at protein level"/>
<keyword id="KW-0025">Alternative splicing</keyword>
<keyword id="KW-0963">Cytoplasm</keyword>
<keyword id="KW-0539">Nucleus</keyword>
<keyword id="KW-0597">Phosphoprotein</keyword>
<keyword id="KW-1185">Reference proteome</keyword>
<keyword id="KW-0804">Transcription</keyword>
<keyword id="KW-0805">Transcription regulation</keyword>
<organism>
    <name type="scientific">Arabidopsis thaliana</name>
    <name type="common">Mouse-ear cress</name>
    <dbReference type="NCBI Taxonomy" id="3702"/>
    <lineage>
        <taxon>Eukaryota</taxon>
        <taxon>Viridiplantae</taxon>
        <taxon>Streptophyta</taxon>
        <taxon>Embryophyta</taxon>
        <taxon>Tracheophyta</taxon>
        <taxon>Spermatophyta</taxon>
        <taxon>Magnoliopsida</taxon>
        <taxon>eudicotyledons</taxon>
        <taxon>Gunneridae</taxon>
        <taxon>Pentapetalae</taxon>
        <taxon>rosids</taxon>
        <taxon>malvids</taxon>
        <taxon>Brassicales</taxon>
        <taxon>Brassicaceae</taxon>
        <taxon>Camelineae</taxon>
        <taxon>Arabidopsis</taxon>
    </lineage>
</organism>
<evidence type="ECO:0000250" key="1">
    <source>
        <dbReference type="UniProtKB" id="Q8S4Q6"/>
    </source>
</evidence>
<evidence type="ECO:0000269" key="2">
    <source>
    </source>
</evidence>
<evidence type="ECO:0000269" key="3">
    <source>
    </source>
</evidence>
<evidence type="ECO:0000269" key="4">
    <source>
    </source>
</evidence>
<evidence type="ECO:0000269" key="5">
    <source>
    </source>
</evidence>
<evidence type="ECO:0000269" key="6">
    <source>
    </source>
</evidence>
<evidence type="ECO:0000269" key="7">
    <source>
    </source>
</evidence>
<evidence type="ECO:0000269" key="8">
    <source>
    </source>
</evidence>
<evidence type="ECO:0000269" key="9">
    <source>
    </source>
</evidence>
<evidence type="ECO:0000269" key="10">
    <source>
    </source>
</evidence>
<evidence type="ECO:0000303" key="11">
    <source>
    </source>
</evidence>
<evidence type="ECO:0000305" key="12"/>
<evidence type="ECO:0000305" key="13">
    <source>
    </source>
</evidence>
<evidence type="ECO:0000312" key="14">
    <source>
        <dbReference type="Araport" id="AT5G02200"/>
    </source>
</evidence>
<evidence type="ECO:0000312" key="15">
    <source>
        <dbReference type="EMBL" id="CAB82993.1"/>
    </source>
</evidence>
<comment type="function">
    <text evidence="1 2 3 6 9 10">Can activate transcription (By similarity). Essential for light-regulated PHYA nuclear accumulation and subsequent PHYA phototropic signaling processes (PubMed:17566111, PubMed:21969386, PubMed:22374392). PHYA-specific signal transducer in response to continuous FR lights. Mediates the association of PHYA with HFR1 and LAF1 in the nucleus in response to FR conditions (PubMed:16045472, PubMed:19482971). Contributes to inhibition of hypocotyl elongation in continuous blue light (B) (PubMed:16045472).</text>
</comment>
<comment type="subunit">
    <text evidence="2 5 6 8 9">Homodimer and heterodimer with FHY1 (PubMed:16045472). Interacts with PHYA, especially upon far-red (FR) light illumination (PubMed:19208901, PubMed:19482971, PubMed:21884939, PubMed:21969386). Binds to LAF1 and HFR1 (PubMed:19482971).</text>
</comment>
<comment type="interaction">
    <interactant intactId="EBI-1163353">
        <id>A8MR65</id>
    </interactant>
    <interactant intactId="EBI-624446">
        <id>P14712</id>
        <label>PHYA</label>
    </interactant>
    <organismsDiffer>false</organismsDiffer>
    <experiments>3</experiments>
</comment>
<comment type="subcellular location">
    <subcellularLocation>
        <location evidence="8">Nucleus</location>
    </subcellularLocation>
    <subcellularLocation>
        <location evidence="8">Cytoplasm</location>
    </subcellularLocation>
    <text evidence="8">Shuttles from cytoplasm to nuclear bodies in FR but stay in the cytoplasm in other light conditions.</text>
</comment>
<comment type="alternative products">
    <event type="alternative splicing"/>
    <isoform>
        <id>A8MR65-1</id>
        <name>1</name>
        <name evidence="11">FHL-3</name>
        <sequence type="displayed"/>
    </isoform>
    <isoform>
        <id>A8MR65-2</id>
        <name>2</name>
        <name evidence="11">FHL-1</name>
        <sequence type="described" ref="VSP_058418"/>
    </isoform>
    <isoform>
        <id>A8MR65-3</id>
        <name>3</name>
        <name evidence="11">FHL-2</name>
        <sequence type="described" ref="VSP_058419 VSP_058420"/>
    </isoform>
</comment>
<comment type="induction">
    <text evidence="2 4 7">Activated by FHY3/FAR1 under far-red light (FR); HY5 prevents this activation (PubMed:16045472, PubMed:18033885, PubMed:21097709). Down-regulated by FR, red (R) and blue (B) lights (PubMed:16045472, PubMed:18033885).</text>
</comment>
<comment type="PTM">
    <text evidence="13">Inactivated by rapid reversible PHYA-mediated phosphorylation.</text>
</comment>
<comment type="disruption phenotype">
    <text evidence="2 3 6 10">Partially blind to far-red (FR). Impaired inhibition of hypocotyl elongation and cotyledons expansion under continuous FR light conditions (PubMed:16045472, PubMed:19482971). In plants lacking FHY1 and FHL, altered phototropism (e.g. phototropic bending) associated with abnormal consitutive cytosolic localization of PHYA (PubMed:17566111, PubMed:22374392). In the double mutant fhl fhy1 several PHYA-dependent phototropic responses are altered (e.g. hypocotyl elongation and cotyledon opening under high-irradiance conditions and seed germination under very-low-fluence conditions), but not for some PHYA-dependent responses such as the abrogation of negative gravitropism in blue light and red-enhanced phototropism (PubMed:17566111). Hyposensitivity to blue light (B) (PubMed:16045472).</text>
</comment>
<comment type="similarity">
    <text evidence="12">Belongs to the FHY1 protein family.</text>
</comment>